<comment type="function">
    <text evidence="1">Catalyzes the condensation of (S)-aspartate-beta-semialdehyde [(S)-ASA] and pyruvate to 4-hydroxy-tetrahydrodipicolinate (HTPA).</text>
</comment>
<comment type="catalytic activity">
    <reaction evidence="1">
        <text>L-aspartate 4-semialdehyde + pyruvate = (2S,4S)-4-hydroxy-2,3,4,5-tetrahydrodipicolinate + H2O + H(+)</text>
        <dbReference type="Rhea" id="RHEA:34171"/>
        <dbReference type="ChEBI" id="CHEBI:15361"/>
        <dbReference type="ChEBI" id="CHEBI:15377"/>
        <dbReference type="ChEBI" id="CHEBI:15378"/>
        <dbReference type="ChEBI" id="CHEBI:67139"/>
        <dbReference type="ChEBI" id="CHEBI:537519"/>
        <dbReference type="EC" id="4.3.3.7"/>
    </reaction>
</comment>
<comment type="pathway">
    <text evidence="1">Amino-acid biosynthesis; L-lysine biosynthesis via DAP pathway; (S)-tetrahydrodipicolinate from L-aspartate: step 3/4.</text>
</comment>
<comment type="subunit">
    <text evidence="1">Homotetramer; dimer of dimers.</text>
</comment>
<comment type="subcellular location">
    <subcellularLocation>
        <location evidence="1">Cytoplasm</location>
    </subcellularLocation>
</comment>
<comment type="similarity">
    <text evidence="1">Belongs to the DapA family.</text>
</comment>
<comment type="caution">
    <text evidence="2">Was originally thought to be a dihydrodipicolinate synthase (DHDPS), catalyzing the condensation of (S)-aspartate-beta-semialdehyde [(S)-ASA] and pyruvate to dihydrodipicolinate (DHDP). However, it was shown in E.coli that the product of the enzymatic reaction is not dihydrodipicolinate but in fact (4S)-4-hydroxy-2,3,4,5-tetrahydro-(2S)-dipicolinic acid (HTPA), and that the consecutive dehydration reaction leading to DHDP is not spontaneous but catalyzed by DapB.</text>
</comment>
<reference key="1">
    <citation type="journal article" date="2005" name="PLoS Biol.">
        <title>The genome sequence of Rickettsia felis identifies the first putative conjugative plasmid in an obligate intracellular parasite.</title>
        <authorList>
            <person name="Ogata H."/>
            <person name="Renesto P."/>
            <person name="Audic S."/>
            <person name="Robert C."/>
            <person name="Blanc G."/>
            <person name="Fournier P.-E."/>
            <person name="Parinello H."/>
            <person name="Claverie J.-M."/>
            <person name="Raoult D."/>
        </authorList>
    </citation>
    <scope>NUCLEOTIDE SEQUENCE [LARGE SCALE GENOMIC DNA]</scope>
    <source>
        <strain>ATCC VR-1525 / URRWXCal2</strain>
    </source>
</reference>
<proteinExistence type="inferred from homology"/>
<name>DAPA_RICFE</name>
<dbReference type="EC" id="4.3.3.7" evidence="1"/>
<dbReference type="EMBL" id="CP000053">
    <property type="protein sequence ID" value="AAY61511.1"/>
    <property type="molecule type" value="Genomic_DNA"/>
</dbReference>
<dbReference type="SMR" id="Q4ULR2"/>
<dbReference type="STRING" id="315456.RF_0660"/>
<dbReference type="KEGG" id="rfe:RF_0660"/>
<dbReference type="eggNOG" id="COG0329">
    <property type="taxonomic scope" value="Bacteria"/>
</dbReference>
<dbReference type="HOGENOM" id="CLU_049343_7_1_5"/>
<dbReference type="OrthoDB" id="9782828at2"/>
<dbReference type="UniPathway" id="UPA00034">
    <property type="reaction ID" value="UER00017"/>
</dbReference>
<dbReference type="Proteomes" id="UP000008548">
    <property type="component" value="Chromosome"/>
</dbReference>
<dbReference type="GO" id="GO:0005737">
    <property type="term" value="C:cytoplasm"/>
    <property type="evidence" value="ECO:0007669"/>
    <property type="project" value="UniProtKB-SubCell"/>
</dbReference>
<dbReference type="GO" id="GO:0008700">
    <property type="term" value="F:(R,S)-4-hydroxy-2-oxoglutarate aldolase activity"/>
    <property type="evidence" value="ECO:0007669"/>
    <property type="project" value="TreeGrafter"/>
</dbReference>
<dbReference type="GO" id="GO:0008840">
    <property type="term" value="F:4-hydroxy-tetrahydrodipicolinate synthase activity"/>
    <property type="evidence" value="ECO:0007669"/>
    <property type="project" value="UniProtKB-UniRule"/>
</dbReference>
<dbReference type="GO" id="GO:0019877">
    <property type="term" value="P:diaminopimelate biosynthetic process"/>
    <property type="evidence" value="ECO:0007669"/>
    <property type="project" value="UniProtKB-UniRule"/>
</dbReference>
<dbReference type="GO" id="GO:0009436">
    <property type="term" value="P:glyoxylate catabolic process"/>
    <property type="evidence" value="ECO:0007669"/>
    <property type="project" value="TreeGrafter"/>
</dbReference>
<dbReference type="GO" id="GO:0009089">
    <property type="term" value="P:lysine biosynthetic process via diaminopimelate"/>
    <property type="evidence" value="ECO:0007669"/>
    <property type="project" value="UniProtKB-UniRule"/>
</dbReference>
<dbReference type="CDD" id="cd00950">
    <property type="entry name" value="DHDPS"/>
    <property type="match status" value="1"/>
</dbReference>
<dbReference type="Gene3D" id="3.20.20.70">
    <property type="entry name" value="Aldolase class I"/>
    <property type="match status" value="1"/>
</dbReference>
<dbReference type="HAMAP" id="MF_00418">
    <property type="entry name" value="DapA"/>
    <property type="match status" value="1"/>
</dbReference>
<dbReference type="InterPro" id="IPR013785">
    <property type="entry name" value="Aldolase_TIM"/>
</dbReference>
<dbReference type="InterPro" id="IPR005263">
    <property type="entry name" value="DapA"/>
</dbReference>
<dbReference type="InterPro" id="IPR002220">
    <property type="entry name" value="DapA-like"/>
</dbReference>
<dbReference type="InterPro" id="IPR020625">
    <property type="entry name" value="Schiff_base-form_aldolases_AS"/>
</dbReference>
<dbReference type="InterPro" id="IPR020624">
    <property type="entry name" value="Schiff_base-form_aldolases_CS"/>
</dbReference>
<dbReference type="NCBIfam" id="TIGR00674">
    <property type="entry name" value="dapA"/>
    <property type="match status" value="1"/>
</dbReference>
<dbReference type="PANTHER" id="PTHR12128:SF66">
    <property type="entry name" value="4-HYDROXY-2-OXOGLUTARATE ALDOLASE, MITOCHONDRIAL"/>
    <property type="match status" value="1"/>
</dbReference>
<dbReference type="PANTHER" id="PTHR12128">
    <property type="entry name" value="DIHYDRODIPICOLINATE SYNTHASE"/>
    <property type="match status" value="1"/>
</dbReference>
<dbReference type="Pfam" id="PF00701">
    <property type="entry name" value="DHDPS"/>
    <property type="match status" value="1"/>
</dbReference>
<dbReference type="PIRSF" id="PIRSF001365">
    <property type="entry name" value="DHDPS"/>
    <property type="match status" value="1"/>
</dbReference>
<dbReference type="PRINTS" id="PR00146">
    <property type="entry name" value="DHPICSNTHASE"/>
</dbReference>
<dbReference type="SMART" id="SM01130">
    <property type="entry name" value="DHDPS"/>
    <property type="match status" value="1"/>
</dbReference>
<dbReference type="SUPFAM" id="SSF51569">
    <property type="entry name" value="Aldolase"/>
    <property type="match status" value="1"/>
</dbReference>
<dbReference type="PROSITE" id="PS00665">
    <property type="entry name" value="DHDPS_1"/>
    <property type="match status" value="1"/>
</dbReference>
<dbReference type="PROSITE" id="PS00666">
    <property type="entry name" value="DHDPS_2"/>
    <property type="match status" value="1"/>
</dbReference>
<sequence length="294" mass="32657">MNNIFKGLITAAITPFKDNKLDLYALERILKHQIKYEVDAILIAGSTGEGSSLSFEEYKLLLQTSVEIVNNRIPIISGCSSNNTAYARELAAESTKIKVDGFMASPPSYVKPTQYGIYKHFEALHEACNLPIMLYSAPTRSGVDFSDETILRLSKLPRILALKDCGVDLERPLRIRAVVKKDFNILTGNDEVVLAFNAQGGVGWTSVASNIAPDMCKELLEKWNKNDTKGALEIHQKLLPLYKALFVESNPIPIKYAAYYLGLCENEIRLPLTEASDSAKKQIENIITSLSIKL</sequence>
<accession>Q4ULR2</accession>
<keyword id="KW-0028">Amino-acid biosynthesis</keyword>
<keyword id="KW-0963">Cytoplasm</keyword>
<keyword id="KW-0220">Diaminopimelate biosynthesis</keyword>
<keyword id="KW-0456">Lyase</keyword>
<keyword id="KW-0457">Lysine biosynthesis</keyword>
<keyword id="KW-0704">Schiff base</keyword>
<feature type="chain" id="PRO_0000103144" description="4-hydroxy-tetrahydrodipicolinate synthase">
    <location>
        <begin position="1"/>
        <end position="294"/>
    </location>
</feature>
<feature type="active site" description="Proton donor/acceptor" evidence="1">
    <location>
        <position position="135"/>
    </location>
</feature>
<feature type="active site" description="Schiff-base intermediate with substrate" evidence="1">
    <location>
        <position position="163"/>
    </location>
</feature>
<feature type="binding site" evidence="1">
    <location>
        <position position="47"/>
    </location>
    <ligand>
        <name>pyruvate</name>
        <dbReference type="ChEBI" id="CHEBI:15361"/>
    </ligand>
</feature>
<feature type="binding site" evidence="1">
    <location>
        <position position="205"/>
    </location>
    <ligand>
        <name>pyruvate</name>
        <dbReference type="ChEBI" id="CHEBI:15361"/>
    </ligand>
</feature>
<feature type="site" description="Part of a proton relay during catalysis" evidence="1">
    <location>
        <position position="46"/>
    </location>
</feature>
<feature type="site" description="Part of a proton relay during catalysis" evidence="1">
    <location>
        <position position="109"/>
    </location>
</feature>
<gene>
    <name evidence="1" type="primary">dapA</name>
    <name type="ordered locus">RF_0660</name>
</gene>
<organism>
    <name type="scientific">Rickettsia felis (strain ATCC VR-1525 / URRWXCal2)</name>
    <name type="common">Rickettsia azadi</name>
    <dbReference type="NCBI Taxonomy" id="315456"/>
    <lineage>
        <taxon>Bacteria</taxon>
        <taxon>Pseudomonadati</taxon>
        <taxon>Pseudomonadota</taxon>
        <taxon>Alphaproteobacteria</taxon>
        <taxon>Rickettsiales</taxon>
        <taxon>Rickettsiaceae</taxon>
        <taxon>Rickettsieae</taxon>
        <taxon>Rickettsia</taxon>
        <taxon>spotted fever group</taxon>
    </lineage>
</organism>
<evidence type="ECO:0000255" key="1">
    <source>
        <dbReference type="HAMAP-Rule" id="MF_00418"/>
    </source>
</evidence>
<evidence type="ECO:0000305" key="2"/>
<protein>
    <recommendedName>
        <fullName evidence="1">4-hydroxy-tetrahydrodipicolinate synthase</fullName>
        <shortName evidence="1">HTPA synthase</shortName>
        <ecNumber evidence="1">4.3.3.7</ecNumber>
    </recommendedName>
</protein>